<sequence>MAEKNERAIKVVAENRKARFNYAIDDTIEVGIALTGTEVKSIRNGKTTIAESYADARGSEIWLINANIPEYLQANRFNHEPKRPRKLLLHRKQINKLIGAVEREGMTLIPLKLYFNERGRAKLQLALAKGKKLHDKRETEKKRDWSREKGRLLRSRG</sequence>
<accession>B3QJG5</accession>
<dbReference type="EMBL" id="CP001096">
    <property type="protein sequence ID" value="ACF01471.1"/>
    <property type="molecule type" value="Genomic_DNA"/>
</dbReference>
<dbReference type="RefSeq" id="WP_011158238.1">
    <property type="nucleotide sequence ID" value="NC_011004.1"/>
</dbReference>
<dbReference type="SMR" id="B3QJG5"/>
<dbReference type="GeneID" id="66893763"/>
<dbReference type="KEGG" id="rpt:Rpal_2963"/>
<dbReference type="HOGENOM" id="CLU_108953_0_1_5"/>
<dbReference type="OrthoDB" id="9805462at2"/>
<dbReference type="Proteomes" id="UP000001725">
    <property type="component" value="Chromosome"/>
</dbReference>
<dbReference type="GO" id="GO:0005829">
    <property type="term" value="C:cytosol"/>
    <property type="evidence" value="ECO:0007669"/>
    <property type="project" value="TreeGrafter"/>
</dbReference>
<dbReference type="GO" id="GO:0003723">
    <property type="term" value="F:RNA binding"/>
    <property type="evidence" value="ECO:0007669"/>
    <property type="project" value="UniProtKB-UniRule"/>
</dbReference>
<dbReference type="GO" id="GO:0070929">
    <property type="term" value="P:trans-translation"/>
    <property type="evidence" value="ECO:0007669"/>
    <property type="project" value="UniProtKB-UniRule"/>
</dbReference>
<dbReference type="CDD" id="cd09294">
    <property type="entry name" value="SmpB"/>
    <property type="match status" value="1"/>
</dbReference>
<dbReference type="Gene3D" id="2.40.280.10">
    <property type="match status" value="1"/>
</dbReference>
<dbReference type="HAMAP" id="MF_00023">
    <property type="entry name" value="SmpB"/>
    <property type="match status" value="1"/>
</dbReference>
<dbReference type="InterPro" id="IPR023620">
    <property type="entry name" value="SmpB"/>
</dbReference>
<dbReference type="InterPro" id="IPR000037">
    <property type="entry name" value="SsrA-bd_prot"/>
</dbReference>
<dbReference type="NCBIfam" id="NF003843">
    <property type="entry name" value="PRK05422.1"/>
    <property type="match status" value="1"/>
</dbReference>
<dbReference type="NCBIfam" id="TIGR00086">
    <property type="entry name" value="smpB"/>
    <property type="match status" value="1"/>
</dbReference>
<dbReference type="PANTHER" id="PTHR30308:SF2">
    <property type="entry name" value="SSRA-BINDING PROTEIN"/>
    <property type="match status" value="1"/>
</dbReference>
<dbReference type="PANTHER" id="PTHR30308">
    <property type="entry name" value="TMRNA-BINDING COMPONENT OF TRANS-TRANSLATION TAGGING COMPLEX"/>
    <property type="match status" value="1"/>
</dbReference>
<dbReference type="Pfam" id="PF01668">
    <property type="entry name" value="SmpB"/>
    <property type="match status" value="1"/>
</dbReference>
<dbReference type="SUPFAM" id="SSF74982">
    <property type="entry name" value="Small protein B (SmpB)"/>
    <property type="match status" value="1"/>
</dbReference>
<gene>
    <name evidence="1" type="primary">smpB</name>
    <name type="ordered locus">Rpal_2963</name>
</gene>
<reference key="1">
    <citation type="submission" date="2008-05" db="EMBL/GenBank/DDBJ databases">
        <title>Complete sequence of Rhodopseudomonas palustris TIE-1.</title>
        <authorList>
            <consortium name="US DOE Joint Genome Institute"/>
            <person name="Lucas S."/>
            <person name="Copeland A."/>
            <person name="Lapidus A."/>
            <person name="Glavina del Rio T."/>
            <person name="Dalin E."/>
            <person name="Tice H."/>
            <person name="Pitluck S."/>
            <person name="Chain P."/>
            <person name="Malfatti S."/>
            <person name="Shin M."/>
            <person name="Vergez L."/>
            <person name="Lang D."/>
            <person name="Schmutz J."/>
            <person name="Larimer F."/>
            <person name="Land M."/>
            <person name="Hauser L."/>
            <person name="Kyrpides N."/>
            <person name="Mikhailova N."/>
            <person name="Emerson D."/>
            <person name="Newman D.K."/>
            <person name="Roden E."/>
            <person name="Richardson P."/>
        </authorList>
    </citation>
    <scope>NUCLEOTIDE SEQUENCE [LARGE SCALE GENOMIC DNA]</scope>
    <source>
        <strain>TIE-1</strain>
    </source>
</reference>
<protein>
    <recommendedName>
        <fullName evidence="1">SsrA-binding protein</fullName>
    </recommendedName>
    <alternativeName>
        <fullName evidence="1">Small protein B</fullName>
    </alternativeName>
</protein>
<keyword id="KW-0963">Cytoplasm</keyword>
<keyword id="KW-0694">RNA-binding</keyword>
<organism>
    <name type="scientific">Rhodopseudomonas palustris (strain TIE-1)</name>
    <dbReference type="NCBI Taxonomy" id="395960"/>
    <lineage>
        <taxon>Bacteria</taxon>
        <taxon>Pseudomonadati</taxon>
        <taxon>Pseudomonadota</taxon>
        <taxon>Alphaproteobacteria</taxon>
        <taxon>Hyphomicrobiales</taxon>
        <taxon>Nitrobacteraceae</taxon>
        <taxon>Rhodopseudomonas</taxon>
    </lineage>
</organism>
<name>SSRP_RHOPT</name>
<feature type="chain" id="PRO_1000090178" description="SsrA-binding protein">
    <location>
        <begin position="1"/>
        <end position="157"/>
    </location>
</feature>
<feature type="region of interest" description="Disordered" evidence="2">
    <location>
        <begin position="132"/>
        <end position="157"/>
    </location>
</feature>
<feature type="compositionally biased region" description="Basic and acidic residues" evidence="2">
    <location>
        <begin position="135"/>
        <end position="151"/>
    </location>
</feature>
<evidence type="ECO:0000255" key="1">
    <source>
        <dbReference type="HAMAP-Rule" id="MF_00023"/>
    </source>
</evidence>
<evidence type="ECO:0000256" key="2">
    <source>
        <dbReference type="SAM" id="MobiDB-lite"/>
    </source>
</evidence>
<comment type="function">
    <text evidence="1">Required for rescue of stalled ribosomes mediated by trans-translation. Binds to transfer-messenger RNA (tmRNA), required for stable association of tmRNA with ribosomes. tmRNA and SmpB together mimic tRNA shape, replacing the anticodon stem-loop with SmpB. tmRNA is encoded by the ssrA gene; the 2 termini fold to resemble tRNA(Ala) and it encodes a 'tag peptide', a short internal open reading frame. During trans-translation Ala-aminoacylated tmRNA acts like a tRNA, entering the A-site of stalled ribosomes, displacing the stalled mRNA. The ribosome then switches to translate the ORF on the tmRNA; the nascent peptide is terminated with the 'tag peptide' encoded by the tmRNA and targeted for degradation. The ribosome is freed to recommence translation, which seems to be the essential function of trans-translation.</text>
</comment>
<comment type="subcellular location">
    <subcellularLocation>
        <location evidence="1">Cytoplasm</location>
    </subcellularLocation>
    <text evidence="1">The tmRNA-SmpB complex associates with stalled 70S ribosomes.</text>
</comment>
<comment type="similarity">
    <text evidence="1">Belongs to the SmpB family.</text>
</comment>
<proteinExistence type="inferred from homology"/>